<keyword id="KW-0963">Cytoplasm</keyword>
<keyword id="KW-0255">Endonuclease</keyword>
<keyword id="KW-0378">Hydrolase</keyword>
<keyword id="KW-0464">Manganese</keyword>
<keyword id="KW-0479">Metal-binding</keyword>
<keyword id="KW-0540">Nuclease</keyword>
<keyword id="KW-1185">Reference proteome</keyword>
<protein>
    <recommendedName>
        <fullName evidence="1">Ribonuclease HII</fullName>
        <shortName evidence="1">RNase HII</shortName>
        <ecNumber evidence="1">3.1.26.4</ecNumber>
    </recommendedName>
</protein>
<feature type="chain" id="PRO_0000235743" description="Ribonuclease HII">
    <location>
        <begin position="1"/>
        <end position="251"/>
    </location>
</feature>
<feature type="domain" description="RNase H type-2" evidence="2">
    <location>
        <begin position="32"/>
        <end position="223"/>
    </location>
</feature>
<feature type="binding site" evidence="1">
    <location>
        <position position="38"/>
    </location>
    <ligand>
        <name>a divalent metal cation</name>
        <dbReference type="ChEBI" id="CHEBI:60240"/>
    </ligand>
</feature>
<feature type="binding site" evidence="1">
    <location>
        <position position="39"/>
    </location>
    <ligand>
        <name>a divalent metal cation</name>
        <dbReference type="ChEBI" id="CHEBI:60240"/>
    </ligand>
</feature>
<feature type="binding site" evidence="1">
    <location>
        <position position="132"/>
    </location>
    <ligand>
        <name>a divalent metal cation</name>
        <dbReference type="ChEBI" id="CHEBI:60240"/>
    </ligand>
</feature>
<proteinExistence type="inferred from homology"/>
<comment type="function">
    <text evidence="1">Endonuclease that specifically degrades the RNA of RNA-DNA hybrids.</text>
</comment>
<comment type="catalytic activity">
    <reaction evidence="1">
        <text>Endonucleolytic cleavage to 5'-phosphomonoester.</text>
        <dbReference type="EC" id="3.1.26.4"/>
    </reaction>
</comment>
<comment type="cofactor">
    <cofactor evidence="1">
        <name>Mn(2+)</name>
        <dbReference type="ChEBI" id="CHEBI:29035"/>
    </cofactor>
    <cofactor evidence="1">
        <name>Mg(2+)</name>
        <dbReference type="ChEBI" id="CHEBI:18420"/>
    </cofactor>
    <text evidence="1">Manganese or magnesium. Binds 1 divalent metal ion per monomer in the absence of substrate. May bind a second metal ion after substrate binding.</text>
</comment>
<comment type="subcellular location">
    <subcellularLocation>
        <location evidence="1">Cytoplasm</location>
    </subcellularLocation>
</comment>
<comment type="similarity">
    <text evidence="1">Belongs to the RNase HII family.</text>
</comment>
<accession>Q5YS47</accession>
<reference key="1">
    <citation type="journal article" date="2004" name="Proc. Natl. Acad. Sci. U.S.A.">
        <title>The complete genomic sequence of Nocardia farcinica IFM 10152.</title>
        <authorList>
            <person name="Ishikawa J."/>
            <person name="Yamashita A."/>
            <person name="Mikami Y."/>
            <person name="Hoshino Y."/>
            <person name="Kurita H."/>
            <person name="Hotta K."/>
            <person name="Shiba T."/>
            <person name="Hattori M."/>
        </authorList>
    </citation>
    <scope>NUCLEOTIDE SEQUENCE [LARGE SCALE GENOMIC DNA]</scope>
    <source>
        <strain>IFM 10152</strain>
    </source>
</reference>
<gene>
    <name evidence="1" type="primary">rnhB</name>
    <name type="ordered locus">NFA_41450</name>
</gene>
<dbReference type="EC" id="3.1.26.4" evidence="1"/>
<dbReference type="EMBL" id="AP006618">
    <property type="protein sequence ID" value="BAD58994.1"/>
    <property type="molecule type" value="Genomic_DNA"/>
</dbReference>
<dbReference type="RefSeq" id="WP_011210679.1">
    <property type="nucleotide sequence ID" value="NC_006361.1"/>
</dbReference>
<dbReference type="SMR" id="Q5YS47"/>
<dbReference type="STRING" id="247156.NFA_41450"/>
<dbReference type="GeneID" id="61134781"/>
<dbReference type="KEGG" id="nfa:NFA_41450"/>
<dbReference type="eggNOG" id="COG0164">
    <property type="taxonomic scope" value="Bacteria"/>
</dbReference>
<dbReference type="HOGENOM" id="CLU_036532_1_0_11"/>
<dbReference type="OrthoDB" id="9803420at2"/>
<dbReference type="Proteomes" id="UP000006820">
    <property type="component" value="Chromosome"/>
</dbReference>
<dbReference type="GO" id="GO:0005737">
    <property type="term" value="C:cytoplasm"/>
    <property type="evidence" value="ECO:0007669"/>
    <property type="project" value="UniProtKB-SubCell"/>
</dbReference>
<dbReference type="GO" id="GO:0032299">
    <property type="term" value="C:ribonuclease H2 complex"/>
    <property type="evidence" value="ECO:0007669"/>
    <property type="project" value="TreeGrafter"/>
</dbReference>
<dbReference type="GO" id="GO:0030145">
    <property type="term" value="F:manganese ion binding"/>
    <property type="evidence" value="ECO:0007669"/>
    <property type="project" value="UniProtKB-UniRule"/>
</dbReference>
<dbReference type="GO" id="GO:0003723">
    <property type="term" value="F:RNA binding"/>
    <property type="evidence" value="ECO:0007669"/>
    <property type="project" value="InterPro"/>
</dbReference>
<dbReference type="GO" id="GO:0004523">
    <property type="term" value="F:RNA-DNA hybrid ribonuclease activity"/>
    <property type="evidence" value="ECO:0007669"/>
    <property type="project" value="UniProtKB-UniRule"/>
</dbReference>
<dbReference type="GO" id="GO:0043137">
    <property type="term" value="P:DNA replication, removal of RNA primer"/>
    <property type="evidence" value="ECO:0007669"/>
    <property type="project" value="TreeGrafter"/>
</dbReference>
<dbReference type="GO" id="GO:0006298">
    <property type="term" value="P:mismatch repair"/>
    <property type="evidence" value="ECO:0007669"/>
    <property type="project" value="TreeGrafter"/>
</dbReference>
<dbReference type="CDD" id="cd07182">
    <property type="entry name" value="RNase_HII_bacteria_HII_like"/>
    <property type="match status" value="1"/>
</dbReference>
<dbReference type="FunFam" id="3.30.420.10:FF:000113">
    <property type="entry name" value="Ribonuclease HII"/>
    <property type="match status" value="1"/>
</dbReference>
<dbReference type="Gene3D" id="3.30.420.10">
    <property type="entry name" value="Ribonuclease H-like superfamily/Ribonuclease H"/>
    <property type="match status" value="1"/>
</dbReference>
<dbReference type="HAMAP" id="MF_00052_B">
    <property type="entry name" value="RNase_HII_B"/>
    <property type="match status" value="1"/>
</dbReference>
<dbReference type="InterPro" id="IPR022898">
    <property type="entry name" value="RNase_HII"/>
</dbReference>
<dbReference type="InterPro" id="IPR001352">
    <property type="entry name" value="RNase_HII/HIII"/>
</dbReference>
<dbReference type="InterPro" id="IPR024567">
    <property type="entry name" value="RNase_HII/HIII_dom"/>
</dbReference>
<dbReference type="InterPro" id="IPR012337">
    <property type="entry name" value="RNaseH-like_sf"/>
</dbReference>
<dbReference type="InterPro" id="IPR036397">
    <property type="entry name" value="RNaseH_sf"/>
</dbReference>
<dbReference type="NCBIfam" id="NF000595">
    <property type="entry name" value="PRK00015.1-3"/>
    <property type="match status" value="1"/>
</dbReference>
<dbReference type="NCBIfam" id="NF000598">
    <property type="entry name" value="PRK00015.2-2"/>
    <property type="match status" value="1"/>
</dbReference>
<dbReference type="NCBIfam" id="NF000600">
    <property type="entry name" value="PRK00015.2-4"/>
    <property type="match status" value="1"/>
</dbReference>
<dbReference type="PANTHER" id="PTHR10954">
    <property type="entry name" value="RIBONUCLEASE H2 SUBUNIT A"/>
    <property type="match status" value="1"/>
</dbReference>
<dbReference type="PANTHER" id="PTHR10954:SF18">
    <property type="entry name" value="RIBONUCLEASE HII"/>
    <property type="match status" value="1"/>
</dbReference>
<dbReference type="Pfam" id="PF01351">
    <property type="entry name" value="RNase_HII"/>
    <property type="match status" value="1"/>
</dbReference>
<dbReference type="SUPFAM" id="SSF53098">
    <property type="entry name" value="Ribonuclease H-like"/>
    <property type="match status" value="1"/>
</dbReference>
<dbReference type="PROSITE" id="PS51975">
    <property type="entry name" value="RNASE_H_2"/>
    <property type="match status" value="1"/>
</dbReference>
<evidence type="ECO:0000255" key="1">
    <source>
        <dbReference type="HAMAP-Rule" id="MF_00052"/>
    </source>
</evidence>
<evidence type="ECO:0000255" key="2">
    <source>
        <dbReference type="PROSITE-ProRule" id="PRU01319"/>
    </source>
</evidence>
<sequence length="251" mass="26572">MTARTGWPPRMVMRKAGGLRTLEAALIRGGLGPVAGVDEAGRGPCAGPLVVAACLLAPKAYDRLAGLDDSKKLTEAAREELYPVITRLALAWEVVVIPAWEIDAIGIHVANIEGMRRAVAGLRQRPGYVLTDGFRVPGLAAPSLPVIGGDAAAACIAAASILAKVTRDRIMVELDSRHPGYGFAAHKGYNTPEHTAALQRLGPCSEHRRSWRNVRERLGLRPLDPTVEYAETVLADGVADSRVAADAAHAG</sequence>
<organism>
    <name type="scientific">Nocardia farcinica (strain IFM 10152)</name>
    <dbReference type="NCBI Taxonomy" id="247156"/>
    <lineage>
        <taxon>Bacteria</taxon>
        <taxon>Bacillati</taxon>
        <taxon>Actinomycetota</taxon>
        <taxon>Actinomycetes</taxon>
        <taxon>Mycobacteriales</taxon>
        <taxon>Nocardiaceae</taxon>
        <taxon>Nocardia</taxon>
    </lineage>
</organism>
<name>RNH2_NOCFA</name>